<keyword id="KW-0004">4Fe-4S</keyword>
<keyword id="KW-0408">Iron</keyword>
<keyword id="KW-0411">Iron-sulfur</keyword>
<keyword id="KW-0479">Metal-binding</keyword>
<keyword id="KW-1185">Reference proteome</keyword>
<keyword id="KW-0677">Repeat</keyword>
<reference key="1">
    <citation type="journal article" date="1997" name="J. Bacteriol.">
        <title>Complete genome sequence of Methanobacterium thermoautotrophicum deltaH: functional analysis and comparative genomics.</title>
        <authorList>
            <person name="Smith D.R."/>
            <person name="Doucette-Stamm L.A."/>
            <person name="Deloughery C."/>
            <person name="Lee H.-M."/>
            <person name="Dubois J."/>
            <person name="Aldredge T."/>
            <person name="Bashirzadeh R."/>
            <person name="Blakely D."/>
            <person name="Cook R."/>
            <person name="Gilbert K."/>
            <person name="Harrison D."/>
            <person name="Hoang L."/>
            <person name="Keagle P."/>
            <person name="Lumm W."/>
            <person name="Pothier B."/>
            <person name="Qiu D."/>
            <person name="Spadafora R."/>
            <person name="Vicare R."/>
            <person name="Wang Y."/>
            <person name="Wierzbowski J."/>
            <person name="Gibson R."/>
            <person name="Jiwani N."/>
            <person name="Caruso A."/>
            <person name="Bush D."/>
            <person name="Safer H."/>
            <person name="Patwell D."/>
            <person name="Prabhakar S."/>
            <person name="McDougall S."/>
            <person name="Shimer G."/>
            <person name="Goyal A."/>
            <person name="Pietrovski S."/>
            <person name="Church G.M."/>
            <person name="Daniels C.J."/>
            <person name="Mao J.-I."/>
            <person name="Rice P."/>
            <person name="Noelling J."/>
            <person name="Reeve J.N."/>
        </authorList>
    </citation>
    <scope>NUCLEOTIDE SEQUENCE [LARGE SCALE GENOMIC DNA]</scope>
    <source>
        <strain>ATCC 29096 / DSM 1053 / JCM 10044 / NBRC 100330 / Delta H</strain>
    </source>
</reference>
<sequence>MSLWPNRSRNWRVHCDCRGFNLDRHVSEINERILEGDAAVFTADEIKDMVRDGDVPSADEVDVVTTATCGVMSGTAAVMHLRVSEPGSFRKAASVELNGIPAYPGPCPNENLGSVDLFIYGTGHSREDPDYGGGFLFRDLLLGSEVEVRVTSVEGRVVESTVTMDDIETARIVGTRMAFRNYTALVNPGETPVKSIFNAFEMPENCGGLSFSGCGDINPLENDPSMETVHQGTGVLLNGARAIVLGEGTRSSPIKPNLMLSGDLHDMKPRYIGGFRTAAGPEIFNTVAVPVPVTSERVLENLMVLNSDIKLPVADVRDRSRVITEITYEDVWSGDVRPVHHPERCTDCAVCLAARRCPTHAIDNGLDLDRCFGCGVCAWSCPSGAYEMDTGTVRIGELAVPIICRQSDRLRARELSLELKKLIENGDFLMG</sequence>
<feature type="chain" id="PRO_0000107482" description="Uncharacterized protein MTH_1684">
    <location>
        <begin position="1"/>
        <end position="431"/>
    </location>
</feature>
<feature type="domain" description="4Fe-4S ferredoxin-type 1" evidence="1">
    <location>
        <begin position="336"/>
        <end position="367"/>
    </location>
</feature>
<feature type="domain" description="4Fe-4S ferredoxin-type 2" evidence="1">
    <location>
        <begin position="362"/>
        <end position="391"/>
    </location>
</feature>
<gene>
    <name type="ordered locus">MTH_1684</name>
</gene>
<protein>
    <recommendedName>
        <fullName>Uncharacterized protein MTH_1684</fullName>
    </recommendedName>
</protein>
<accession>O27719</accession>
<proteinExistence type="predicted"/>
<evidence type="ECO:0000255" key="1">
    <source>
        <dbReference type="PROSITE-ProRule" id="PRU00711"/>
    </source>
</evidence>
<dbReference type="EMBL" id="AE000666">
    <property type="protein sequence ID" value="AAB86156.1"/>
    <property type="molecule type" value="Genomic_DNA"/>
</dbReference>
<dbReference type="PIR" id="B69092">
    <property type="entry name" value="B69092"/>
</dbReference>
<dbReference type="RefSeq" id="WP_010877291.1">
    <property type="nucleotide sequence ID" value="NC_000916.1"/>
</dbReference>
<dbReference type="SMR" id="O27719"/>
<dbReference type="STRING" id="187420.MTH_1684"/>
<dbReference type="PaxDb" id="187420-MTH_1684"/>
<dbReference type="EnsemblBacteria" id="AAB86156">
    <property type="protein sequence ID" value="AAB86156"/>
    <property type="gene ID" value="MTH_1684"/>
</dbReference>
<dbReference type="GeneID" id="1470769"/>
<dbReference type="KEGG" id="mth:MTH_1684"/>
<dbReference type="PATRIC" id="fig|187420.15.peg.1644"/>
<dbReference type="HOGENOM" id="CLU_061500_0_0_2"/>
<dbReference type="InParanoid" id="O27719"/>
<dbReference type="Proteomes" id="UP000005223">
    <property type="component" value="Chromosome"/>
</dbReference>
<dbReference type="GO" id="GO:0051539">
    <property type="term" value="F:4 iron, 4 sulfur cluster binding"/>
    <property type="evidence" value="ECO:0007669"/>
    <property type="project" value="UniProtKB-KW"/>
</dbReference>
<dbReference type="GO" id="GO:0046872">
    <property type="term" value="F:metal ion binding"/>
    <property type="evidence" value="ECO:0007669"/>
    <property type="project" value="UniProtKB-KW"/>
</dbReference>
<dbReference type="GO" id="GO:0016491">
    <property type="term" value="F:oxidoreductase activity"/>
    <property type="evidence" value="ECO:0007669"/>
    <property type="project" value="UniProtKB-ARBA"/>
</dbReference>
<dbReference type="Gene3D" id="3.30.70.20">
    <property type="match status" value="1"/>
</dbReference>
<dbReference type="InterPro" id="IPR017896">
    <property type="entry name" value="4Fe4S_Fe-S-bd"/>
</dbReference>
<dbReference type="InterPro" id="IPR017900">
    <property type="entry name" value="4Fe4S_Fe_S_CS"/>
</dbReference>
<dbReference type="InterPro" id="IPR002708">
    <property type="entry name" value="HcyBio"/>
</dbReference>
<dbReference type="InterPro" id="IPR017677">
    <property type="entry name" value="Methan_mark_16"/>
</dbReference>
<dbReference type="NCBIfam" id="TIGR03287">
    <property type="entry name" value="methan_mark_16"/>
    <property type="match status" value="1"/>
</dbReference>
<dbReference type="PANTHER" id="PTHR43724">
    <property type="entry name" value="PYRUVATE SYNTHASE SUBUNIT PORD"/>
    <property type="match status" value="1"/>
</dbReference>
<dbReference type="PANTHER" id="PTHR43724:SF1">
    <property type="entry name" value="PYRUVATE SYNTHASE SUBUNIT PORD"/>
    <property type="match status" value="1"/>
</dbReference>
<dbReference type="Pfam" id="PF00037">
    <property type="entry name" value="Fer4"/>
    <property type="match status" value="1"/>
</dbReference>
<dbReference type="Pfam" id="PF01837">
    <property type="entry name" value="HcyBio"/>
    <property type="match status" value="1"/>
</dbReference>
<dbReference type="SUPFAM" id="SSF54862">
    <property type="entry name" value="4Fe-4S ferredoxins"/>
    <property type="match status" value="1"/>
</dbReference>
<dbReference type="PROSITE" id="PS00198">
    <property type="entry name" value="4FE4S_FER_1"/>
    <property type="match status" value="1"/>
</dbReference>
<dbReference type="PROSITE" id="PS51379">
    <property type="entry name" value="4FE4S_FER_2"/>
    <property type="match status" value="2"/>
</dbReference>
<organism>
    <name type="scientific">Methanothermobacter thermautotrophicus (strain ATCC 29096 / DSM 1053 / JCM 10044 / NBRC 100330 / Delta H)</name>
    <name type="common">Methanobacterium thermoautotrophicum</name>
    <dbReference type="NCBI Taxonomy" id="187420"/>
    <lineage>
        <taxon>Archaea</taxon>
        <taxon>Methanobacteriati</taxon>
        <taxon>Methanobacteriota</taxon>
        <taxon>Methanomada group</taxon>
        <taxon>Methanobacteria</taxon>
        <taxon>Methanobacteriales</taxon>
        <taxon>Methanobacteriaceae</taxon>
        <taxon>Methanothermobacter</taxon>
    </lineage>
</organism>
<name>Y1684_METTH</name>